<reference key="1">
    <citation type="journal article" date="2003" name="Proc. Natl. Acad. Sci. U.S.A.">
        <title>The complete genome sequence of the carcinogenic bacterium Helicobacter hepaticus.</title>
        <authorList>
            <person name="Suerbaum S."/>
            <person name="Josenhans C."/>
            <person name="Sterzenbach T."/>
            <person name="Drescher B."/>
            <person name="Brandt P."/>
            <person name="Bell M."/>
            <person name="Droege M."/>
            <person name="Fartmann B."/>
            <person name="Fischer H.-P."/>
            <person name="Ge Z."/>
            <person name="Hoerster A."/>
            <person name="Holland R."/>
            <person name="Klein K."/>
            <person name="Koenig J."/>
            <person name="Macko L."/>
            <person name="Mendz G.L."/>
            <person name="Nyakatura G."/>
            <person name="Schauer D.B."/>
            <person name="Shen Z."/>
            <person name="Weber J."/>
            <person name="Frosch M."/>
            <person name="Fox J.G."/>
        </authorList>
    </citation>
    <scope>NUCLEOTIDE SEQUENCE [LARGE SCALE GENOMIC DNA]</scope>
    <source>
        <strain>ATCC 51449 / 3B1</strain>
    </source>
</reference>
<evidence type="ECO:0000255" key="1">
    <source>
        <dbReference type="HAMAP-Rule" id="MF_00358"/>
    </source>
</evidence>
<evidence type="ECO:0000305" key="2"/>
<protein>
    <recommendedName>
        <fullName evidence="1">Small ribosomal subunit protein bS21</fullName>
    </recommendedName>
    <alternativeName>
        <fullName evidence="2">30S ribosomal protein S21</fullName>
    </alternativeName>
</protein>
<dbReference type="EMBL" id="AE017125">
    <property type="protein sequence ID" value="AAP77374.1"/>
    <property type="molecule type" value="Genomic_DNA"/>
</dbReference>
<dbReference type="RefSeq" id="WP_011115619.1">
    <property type="nucleotide sequence ID" value="NC_004917.1"/>
</dbReference>
<dbReference type="SMR" id="Q7VI31"/>
<dbReference type="STRING" id="235279.HH_0777"/>
<dbReference type="GeneID" id="82321271"/>
<dbReference type="KEGG" id="hhe:HH_0777"/>
<dbReference type="eggNOG" id="COG0828">
    <property type="taxonomic scope" value="Bacteria"/>
</dbReference>
<dbReference type="HOGENOM" id="CLU_159258_1_1_7"/>
<dbReference type="OrthoDB" id="9799244at2"/>
<dbReference type="Proteomes" id="UP000002495">
    <property type="component" value="Chromosome"/>
</dbReference>
<dbReference type="GO" id="GO:1990904">
    <property type="term" value="C:ribonucleoprotein complex"/>
    <property type="evidence" value="ECO:0007669"/>
    <property type="project" value="UniProtKB-KW"/>
</dbReference>
<dbReference type="GO" id="GO:0005840">
    <property type="term" value="C:ribosome"/>
    <property type="evidence" value="ECO:0007669"/>
    <property type="project" value="UniProtKB-KW"/>
</dbReference>
<dbReference type="GO" id="GO:0003735">
    <property type="term" value="F:structural constituent of ribosome"/>
    <property type="evidence" value="ECO:0007669"/>
    <property type="project" value="InterPro"/>
</dbReference>
<dbReference type="GO" id="GO:0006412">
    <property type="term" value="P:translation"/>
    <property type="evidence" value="ECO:0007669"/>
    <property type="project" value="UniProtKB-UniRule"/>
</dbReference>
<dbReference type="Gene3D" id="1.20.5.1150">
    <property type="entry name" value="Ribosomal protein S8"/>
    <property type="match status" value="1"/>
</dbReference>
<dbReference type="HAMAP" id="MF_00358">
    <property type="entry name" value="Ribosomal_bS21"/>
    <property type="match status" value="1"/>
</dbReference>
<dbReference type="InterPro" id="IPR001911">
    <property type="entry name" value="Ribosomal_bS21"/>
</dbReference>
<dbReference type="InterPro" id="IPR038380">
    <property type="entry name" value="Ribosomal_bS21_sf"/>
</dbReference>
<dbReference type="NCBIfam" id="TIGR00030">
    <property type="entry name" value="S21p"/>
    <property type="match status" value="1"/>
</dbReference>
<dbReference type="Pfam" id="PF01165">
    <property type="entry name" value="Ribosomal_S21"/>
    <property type="match status" value="1"/>
</dbReference>
<dbReference type="PRINTS" id="PR00976">
    <property type="entry name" value="RIBOSOMALS21"/>
</dbReference>
<proteinExistence type="inferred from homology"/>
<accession>Q7VI31</accession>
<feature type="chain" id="PRO_0000178340" description="Small ribosomal subunit protein bS21">
    <location>
        <begin position="1"/>
        <end position="70"/>
    </location>
</feature>
<name>RS21_HELHP</name>
<keyword id="KW-1185">Reference proteome</keyword>
<keyword id="KW-0687">Ribonucleoprotein</keyword>
<keyword id="KW-0689">Ribosomal protein</keyword>
<comment type="similarity">
    <text evidence="1">Belongs to the bacterial ribosomal protein bS21 family.</text>
</comment>
<gene>
    <name evidence="1" type="primary">rpsU</name>
    <name type="ordered locus">HH_0777</name>
</gene>
<sequence length="70" mass="8658">MPGIKVKESESFEEAYRKFKKQTDRNLVVTEVRARRFFESKTEKRKKQKINAKKKMLKRLYMLRRYESKL</sequence>
<organism>
    <name type="scientific">Helicobacter hepaticus (strain ATCC 51449 / 3B1)</name>
    <dbReference type="NCBI Taxonomy" id="235279"/>
    <lineage>
        <taxon>Bacteria</taxon>
        <taxon>Pseudomonadati</taxon>
        <taxon>Campylobacterota</taxon>
        <taxon>Epsilonproteobacteria</taxon>
        <taxon>Campylobacterales</taxon>
        <taxon>Helicobacteraceae</taxon>
        <taxon>Helicobacter</taxon>
    </lineage>
</organism>